<organism>
    <name type="scientific">Homo sapiens</name>
    <name type="common">Human</name>
    <dbReference type="NCBI Taxonomy" id="9606"/>
    <lineage>
        <taxon>Eukaryota</taxon>
        <taxon>Metazoa</taxon>
        <taxon>Chordata</taxon>
        <taxon>Craniata</taxon>
        <taxon>Vertebrata</taxon>
        <taxon>Euteleostomi</taxon>
        <taxon>Mammalia</taxon>
        <taxon>Eutheria</taxon>
        <taxon>Euarchontoglires</taxon>
        <taxon>Primates</taxon>
        <taxon>Haplorrhini</taxon>
        <taxon>Catarrhini</taxon>
        <taxon>Hominidae</taxon>
        <taxon>Homo</taxon>
    </lineage>
</organism>
<feature type="chain" id="PRO_0000282402" description="Arginine vasopressin-induced protein 1">
    <location>
        <begin position="1"/>
        <end position="147"/>
    </location>
</feature>
<feature type="region of interest" description="Disordered" evidence="2">
    <location>
        <begin position="1"/>
        <end position="24"/>
    </location>
</feature>
<feature type="region of interest" description="Disordered" evidence="2">
    <location>
        <begin position="104"/>
        <end position="147"/>
    </location>
</feature>
<feature type="compositionally biased region" description="Polar residues" evidence="2">
    <location>
        <begin position="105"/>
        <end position="119"/>
    </location>
</feature>
<feature type="compositionally biased region" description="Basic residues" evidence="2">
    <location>
        <begin position="121"/>
        <end position="134"/>
    </location>
</feature>
<feature type="compositionally biased region" description="Polar residues" evidence="2">
    <location>
        <begin position="137"/>
        <end position="147"/>
    </location>
</feature>
<feature type="sequence variant" id="VAR_031405" description="In dbSNP:rs2275047." evidence="3 4 5">
    <original>A</original>
    <variation>G</variation>
    <location>
        <position position="41"/>
    </location>
</feature>
<feature type="sequence conflict" description="In Ref. 2; AAG44474." evidence="6" ref="2">
    <original>H</original>
    <variation>R</variation>
    <location>
        <position position="65"/>
    </location>
</feature>
<feature type="sequence conflict" description="In Ref. 3; BAD96819." evidence="6" ref="3">
    <original>R</original>
    <variation>K</variation>
    <location>
        <position position="81"/>
    </location>
</feature>
<sequence>MGTPASVVSEPPPWQAPIEARGRKQASANIFQDAELLQIQALFQRSGDQLAEERAQIIWECAGDHRVAEALKRLRRKRPPRQKPLGHSLHHCSRLRILEPHSALANPQSATETASSEQYLHSRKKSARIRRNWRKSGPTSYLHQIRH</sequence>
<evidence type="ECO:0000250" key="1"/>
<evidence type="ECO:0000256" key="2">
    <source>
        <dbReference type="SAM" id="MobiDB-lite"/>
    </source>
</evidence>
<evidence type="ECO:0000269" key="3">
    <source>
    </source>
</evidence>
<evidence type="ECO:0000269" key="4">
    <source>
    </source>
</evidence>
<evidence type="ECO:0000269" key="5">
    <source ref="3"/>
</evidence>
<evidence type="ECO:0000305" key="6"/>
<protein>
    <recommendedName>
        <fullName>Arginine vasopressin-induced protein 1</fullName>
        <shortName>AVP-induced protein 1</shortName>
    </recommendedName>
</protein>
<keyword id="KW-0131">Cell cycle</keyword>
<keyword id="KW-1267">Proteomics identification</keyword>
<keyword id="KW-1185">Reference proteome</keyword>
<gene>
    <name type="primary">AVPI1</name>
    <name type="ORF">NPD013</name>
    <name type="ORF">PP5395</name>
</gene>
<dbReference type="EMBL" id="AF218019">
    <property type="protein sequence ID" value="AAG17261.1"/>
    <property type="molecule type" value="mRNA"/>
</dbReference>
<dbReference type="EMBL" id="AF241786">
    <property type="protein sequence ID" value="AAG44474.1"/>
    <property type="status" value="ALT_FRAME"/>
    <property type="molecule type" value="mRNA"/>
</dbReference>
<dbReference type="EMBL" id="AK223099">
    <property type="protein sequence ID" value="BAD96819.1"/>
    <property type="molecule type" value="mRNA"/>
</dbReference>
<dbReference type="EMBL" id="AK222493">
    <property type="protein sequence ID" value="BAD96213.1"/>
    <property type="molecule type" value="mRNA"/>
</dbReference>
<dbReference type="EMBL" id="AL355315">
    <property type="status" value="NOT_ANNOTATED_CDS"/>
    <property type="molecule type" value="Genomic_DNA"/>
</dbReference>
<dbReference type="EMBL" id="BC000877">
    <property type="protein sequence ID" value="AAH00877.1"/>
    <property type="molecule type" value="mRNA"/>
</dbReference>
<dbReference type="CCDS" id="CCDS7470.1"/>
<dbReference type="RefSeq" id="NP_068378.2">
    <property type="nucleotide sequence ID" value="NM_021732.3"/>
</dbReference>
<dbReference type="RefSeq" id="XP_016871983.1">
    <property type="nucleotide sequence ID" value="XM_017016494.2"/>
</dbReference>
<dbReference type="RefSeq" id="XP_054222488.1">
    <property type="nucleotide sequence ID" value="XM_054366513.1"/>
</dbReference>
<dbReference type="BioGRID" id="121901">
    <property type="interactions" value="48"/>
</dbReference>
<dbReference type="FunCoup" id="Q5T686">
    <property type="interactions" value="12"/>
</dbReference>
<dbReference type="IntAct" id="Q5T686">
    <property type="interactions" value="42"/>
</dbReference>
<dbReference type="MINT" id="Q5T686"/>
<dbReference type="STRING" id="9606.ENSP00000359660"/>
<dbReference type="iPTMnet" id="Q5T686"/>
<dbReference type="PhosphoSitePlus" id="Q5T686"/>
<dbReference type="BioMuta" id="AVPI1"/>
<dbReference type="DMDM" id="317373474"/>
<dbReference type="MassIVE" id="Q5T686"/>
<dbReference type="PaxDb" id="9606-ENSP00000359660"/>
<dbReference type="PeptideAtlas" id="Q5T686"/>
<dbReference type="Pumba" id="Q5T686"/>
<dbReference type="Antibodypedia" id="52147">
    <property type="antibodies" value="173 antibodies from 19 providers"/>
</dbReference>
<dbReference type="DNASU" id="60370"/>
<dbReference type="Ensembl" id="ENST00000370626.4">
    <property type="protein sequence ID" value="ENSP00000359660.3"/>
    <property type="gene ID" value="ENSG00000119986.7"/>
</dbReference>
<dbReference type="GeneID" id="60370"/>
<dbReference type="KEGG" id="hsa:60370"/>
<dbReference type="MANE-Select" id="ENST00000370626.4">
    <property type="protein sequence ID" value="ENSP00000359660.3"/>
    <property type="RefSeq nucleotide sequence ID" value="NM_021732.3"/>
    <property type="RefSeq protein sequence ID" value="NP_068378.2"/>
</dbReference>
<dbReference type="UCSC" id="uc057vge.1">
    <property type="organism name" value="human"/>
</dbReference>
<dbReference type="AGR" id="HGNC:30898"/>
<dbReference type="CTD" id="60370"/>
<dbReference type="GeneCards" id="AVPI1"/>
<dbReference type="HGNC" id="HGNC:30898">
    <property type="gene designation" value="AVPI1"/>
</dbReference>
<dbReference type="HPA" id="ENSG00000119986">
    <property type="expression patterns" value="Tissue enhanced (skin)"/>
</dbReference>
<dbReference type="MIM" id="618537">
    <property type="type" value="gene"/>
</dbReference>
<dbReference type="neXtProt" id="NX_Q5T686"/>
<dbReference type="OpenTargets" id="ENSG00000119986"/>
<dbReference type="PharmGKB" id="PA134905326"/>
<dbReference type="VEuPathDB" id="HostDB:ENSG00000119986"/>
<dbReference type="eggNOG" id="ENOG502SBE0">
    <property type="taxonomic scope" value="Eukaryota"/>
</dbReference>
<dbReference type="GeneTree" id="ENSGT00510000049872"/>
<dbReference type="HOGENOM" id="CLU_106134_0_0_1"/>
<dbReference type="InParanoid" id="Q5T686"/>
<dbReference type="OMA" id="NWKKPGP"/>
<dbReference type="OrthoDB" id="9906905at2759"/>
<dbReference type="PAN-GO" id="Q5T686">
    <property type="GO annotations" value="0 GO annotations based on evolutionary models"/>
</dbReference>
<dbReference type="PhylomeDB" id="Q5T686"/>
<dbReference type="TreeFam" id="TF338287"/>
<dbReference type="PathwayCommons" id="Q5T686"/>
<dbReference type="SignaLink" id="Q5T686"/>
<dbReference type="BioGRID-ORCS" id="60370">
    <property type="hits" value="14 hits in 1164 CRISPR screens"/>
</dbReference>
<dbReference type="ChiTaRS" id="AVPI1">
    <property type="organism name" value="human"/>
</dbReference>
<dbReference type="GeneWiki" id="AVPI1"/>
<dbReference type="GenomeRNAi" id="60370"/>
<dbReference type="Pharos" id="Q5T686">
    <property type="development level" value="Tbio"/>
</dbReference>
<dbReference type="PRO" id="PR:Q5T686"/>
<dbReference type="Proteomes" id="UP000005640">
    <property type="component" value="Chromosome 10"/>
</dbReference>
<dbReference type="RNAct" id="Q5T686">
    <property type="molecule type" value="protein"/>
</dbReference>
<dbReference type="Bgee" id="ENSG00000119986">
    <property type="expression patterns" value="Expressed in mucosa of stomach and 186 other cell types or tissues"/>
</dbReference>
<dbReference type="GO" id="GO:0043410">
    <property type="term" value="P:positive regulation of MAPK cascade"/>
    <property type="evidence" value="ECO:0000318"/>
    <property type="project" value="GO_Central"/>
</dbReference>
<dbReference type="InterPro" id="IPR039579">
    <property type="entry name" value="AVPI1"/>
</dbReference>
<dbReference type="InterPro" id="IPR020282">
    <property type="entry name" value="Avpi1/C8orf4_dom"/>
</dbReference>
<dbReference type="PANTHER" id="PTHR14350">
    <property type="entry name" value="ARGININE VASOPRESSIN-INDUCED PROTEIN 1"/>
    <property type="match status" value="1"/>
</dbReference>
<dbReference type="Pfam" id="PF15063">
    <property type="entry name" value="TC1"/>
    <property type="match status" value="1"/>
</dbReference>
<reference key="1">
    <citation type="journal article" date="2004" name="Proc. Natl. Acad. Sci. U.S.A.">
        <title>Large-scale cDNA transfection screening for genes related to cancer development and progression.</title>
        <authorList>
            <person name="Wan D."/>
            <person name="Gong Y."/>
            <person name="Qin W."/>
            <person name="Zhang P."/>
            <person name="Li J."/>
            <person name="Wei L."/>
            <person name="Zhou X."/>
            <person name="Li H."/>
            <person name="Qiu X."/>
            <person name="Zhong F."/>
            <person name="He L."/>
            <person name="Yu J."/>
            <person name="Yao G."/>
            <person name="Jiang H."/>
            <person name="Qian L."/>
            <person name="Yu Y."/>
            <person name="Shu H."/>
            <person name="Chen X."/>
            <person name="Xu H."/>
            <person name="Guo M."/>
            <person name="Pan Z."/>
            <person name="Chen Y."/>
            <person name="Ge C."/>
            <person name="Yang S."/>
            <person name="Gu J."/>
        </authorList>
    </citation>
    <scope>NUCLEOTIDE SEQUENCE [LARGE SCALE MRNA]</scope>
    <scope>VARIANT GLY-41</scope>
</reference>
<reference key="2">
    <citation type="submission" date="2000-03" db="EMBL/GenBank/DDBJ databases">
        <authorList>
            <person name="Cheng Z."/>
            <person name="Gao G."/>
            <person name="Peng Y."/>
            <person name="Ren S."/>
            <person name="Chen Z."/>
            <person name="Han Z."/>
        </authorList>
    </citation>
    <scope>NUCLEOTIDE SEQUENCE [LARGE SCALE MRNA]</scope>
    <source>
        <tissue>Pituitary</tissue>
    </source>
</reference>
<reference key="3">
    <citation type="submission" date="2005-04" db="EMBL/GenBank/DDBJ databases">
        <authorList>
            <person name="Suzuki Y."/>
            <person name="Sugano S."/>
            <person name="Totoki Y."/>
            <person name="Toyoda A."/>
            <person name="Takeda T."/>
            <person name="Sakaki Y."/>
            <person name="Tanaka A."/>
            <person name="Yokoyama S."/>
        </authorList>
    </citation>
    <scope>NUCLEOTIDE SEQUENCE [LARGE SCALE MRNA]</scope>
    <scope>VARIANT GLY-41</scope>
    <source>
        <tissue>Adipose tissue</tissue>
    </source>
</reference>
<reference key="4">
    <citation type="journal article" date="2004" name="Nature">
        <title>The DNA sequence and comparative analysis of human chromosome 10.</title>
        <authorList>
            <person name="Deloukas P."/>
            <person name="Earthrowl M.E."/>
            <person name="Grafham D.V."/>
            <person name="Rubenfield M."/>
            <person name="French L."/>
            <person name="Steward C.A."/>
            <person name="Sims S.K."/>
            <person name="Jones M.C."/>
            <person name="Searle S."/>
            <person name="Scott C."/>
            <person name="Howe K."/>
            <person name="Hunt S.E."/>
            <person name="Andrews T.D."/>
            <person name="Gilbert J.G.R."/>
            <person name="Swarbreck D."/>
            <person name="Ashurst J.L."/>
            <person name="Taylor A."/>
            <person name="Battles J."/>
            <person name="Bird C.P."/>
            <person name="Ainscough R."/>
            <person name="Almeida J.P."/>
            <person name="Ashwell R.I.S."/>
            <person name="Ambrose K.D."/>
            <person name="Babbage A.K."/>
            <person name="Bagguley C.L."/>
            <person name="Bailey J."/>
            <person name="Banerjee R."/>
            <person name="Bates K."/>
            <person name="Beasley H."/>
            <person name="Bray-Allen S."/>
            <person name="Brown A.J."/>
            <person name="Brown J.Y."/>
            <person name="Burford D.C."/>
            <person name="Burrill W."/>
            <person name="Burton J."/>
            <person name="Cahill P."/>
            <person name="Camire D."/>
            <person name="Carter N.P."/>
            <person name="Chapman J.C."/>
            <person name="Clark S.Y."/>
            <person name="Clarke G."/>
            <person name="Clee C.M."/>
            <person name="Clegg S."/>
            <person name="Corby N."/>
            <person name="Coulson A."/>
            <person name="Dhami P."/>
            <person name="Dutta I."/>
            <person name="Dunn M."/>
            <person name="Faulkner L."/>
            <person name="Frankish A."/>
            <person name="Frankland J.A."/>
            <person name="Garner P."/>
            <person name="Garnett J."/>
            <person name="Gribble S."/>
            <person name="Griffiths C."/>
            <person name="Grocock R."/>
            <person name="Gustafson E."/>
            <person name="Hammond S."/>
            <person name="Harley J.L."/>
            <person name="Hart E."/>
            <person name="Heath P.D."/>
            <person name="Ho T.P."/>
            <person name="Hopkins B."/>
            <person name="Horne J."/>
            <person name="Howden P.J."/>
            <person name="Huckle E."/>
            <person name="Hynds C."/>
            <person name="Johnson C."/>
            <person name="Johnson D."/>
            <person name="Kana A."/>
            <person name="Kay M."/>
            <person name="Kimberley A.M."/>
            <person name="Kershaw J.K."/>
            <person name="Kokkinaki M."/>
            <person name="Laird G.K."/>
            <person name="Lawlor S."/>
            <person name="Lee H.M."/>
            <person name="Leongamornlert D.A."/>
            <person name="Laird G."/>
            <person name="Lloyd C."/>
            <person name="Lloyd D.M."/>
            <person name="Loveland J."/>
            <person name="Lovell J."/>
            <person name="McLaren S."/>
            <person name="McLay K.E."/>
            <person name="McMurray A."/>
            <person name="Mashreghi-Mohammadi M."/>
            <person name="Matthews L."/>
            <person name="Milne S."/>
            <person name="Nickerson T."/>
            <person name="Nguyen M."/>
            <person name="Overton-Larty E."/>
            <person name="Palmer S.A."/>
            <person name="Pearce A.V."/>
            <person name="Peck A.I."/>
            <person name="Pelan S."/>
            <person name="Phillimore B."/>
            <person name="Porter K."/>
            <person name="Rice C.M."/>
            <person name="Rogosin A."/>
            <person name="Ross M.T."/>
            <person name="Sarafidou T."/>
            <person name="Sehra H.K."/>
            <person name="Shownkeen R."/>
            <person name="Skuce C.D."/>
            <person name="Smith M."/>
            <person name="Standring L."/>
            <person name="Sycamore N."/>
            <person name="Tester J."/>
            <person name="Thorpe A."/>
            <person name="Torcasso W."/>
            <person name="Tracey A."/>
            <person name="Tromans A."/>
            <person name="Tsolas J."/>
            <person name="Wall M."/>
            <person name="Walsh J."/>
            <person name="Wang H."/>
            <person name="Weinstock K."/>
            <person name="West A.P."/>
            <person name="Willey D.L."/>
            <person name="Whitehead S.L."/>
            <person name="Wilming L."/>
            <person name="Wray P.W."/>
            <person name="Young L."/>
            <person name="Chen Y."/>
            <person name="Lovering R.C."/>
            <person name="Moschonas N.K."/>
            <person name="Siebert R."/>
            <person name="Fechtel K."/>
            <person name="Bentley D."/>
            <person name="Durbin R.M."/>
            <person name="Hubbard T."/>
            <person name="Doucette-Stamm L."/>
            <person name="Beck S."/>
            <person name="Smith D.R."/>
            <person name="Rogers J."/>
        </authorList>
    </citation>
    <scope>NUCLEOTIDE SEQUENCE [LARGE SCALE GENOMIC DNA]</scope>
</reference>
<reference key="5">
    <citation type="journal article" date="2004" name="Genome Res.">
        <title>The status, quality, and expansion of the NIH full-length cDNA project: the Mammalian Gene Collection (MGC).</title>
        <authorList>
            <consortium name="The MGC Project Team"/>
        </authorList>
    </citation>
    <scope>NUCLEOTIDE SEQUENCE [LARGE SCALE MRNA]</scope>
    <scope>VARIANT GLY-41</scope>
    <source>
        <tissue>Cervix</tissue>
    </source>
</reference>
<proteinExistence type="evidence at protein level"/>
<name>AVPI1_HUMAN</name>
<comment type="function">
    <text evidence="1">May be involved in MAP kinase activation, epithelial sodium channel (ENaC) down-regulation and cell cycling.</text>
</comment>
<comment type="interaction">
    <interactant intactId="EBI-8640233">
        <id>Q5T686</id>
    </interactant>
    <interactant intactId="EBI-8643161">
        <id>Q9NX04</id>
        <label>AIRIM</label>
    </interactant>
    <organismsDiffer>false</organismsDiffer>
    <experiments>3</experiments>
</comment>
<comment type="interaction">
    <interactant intactId="EBI-8640233">
        <id>Q5T686</id>
    </interactant>
    <interactant intactId="EBI-12011224">
        <id>Q9NPB3</id>
        <label>CABP2</label>
    </interactant>
    <organismsDiffer>false</organismsDiffer>
    <experiments>3</experiments>
</comment>
<comment type="interaction">
    <interactant intactId="EBI-8640233">
        <id>Q5T686</id>
    </interactant>
    <interactant intactId="EBI-5278764">
        <id>Q96GN5</id>
        <label>CDCA7L</label>
    </interactant>
    <organismsDiffer>false</organismsDiffer>
    <experiments>3</experiments>
</comment>
<comment type="interaction">
    <interactant intactId="EBI-8640233">
        <id>Q5T686</id>
    </interactant>
    <interactant intactId="EBI-3867333">
        <id>A8MQ03</id>
        <label>CYSRT1</label>
    </interactant>
    <organismsDiffer>false</organismsDiffer>
    <experiments>3</experiments>
</comment>
<comment type="interaction">
    <interactant intactId="EBI-8640233">
        <id>Q5T686</id>
    </interactant>
    <interactant intactId="EBI-742953">
        <id>Q9BY27</id>
        <label>DGCR6L</label>
    </interactant>
    <organismsDiffer>false</organismsDiffer>
    <experiments>3</experiments>
</comment>
<comment type="interaction">
    <interactant intactId="EBI-8640233">
        <id>Q5T686</id>
    </interactant>
    <interactant intactId="EBI-489887">
        <id>P50402</id>
        <label>EMD</label>
    </interactant>
    <organismsDiffer>false</organismsDiffer>
    <experiments>3</experiments>
</comment>
<comment type="interaction">
    <interactant intactId="EBI-8640233">
        <id>Q5T686</id>
    </interactant>
    <interactant intactId="EBI-744099">
        <id>Q9H0I2</id>
        <label>ENKD1</label>
    </interactant>
    <organismsDiffer>false</organismsDiffer>
    <experiments>3</experiments>
</comment>
<comment type="interaction">
    <interactant intactId="EBI-8640233">
        <id>Q5T686</id>
    </interactant>
    <interactant intactId="EBI-5916454">
        <id>A6NEM1</id>
        <label>GOLGA6L9</label>
    </interactant>
    <organismsDiffer>false</organismsDiffer>
    <experiments>3</experiments>
</comment>
<comment type="interaction">
    <interactant intactId="EBI-8640233">
        <id>Q5T686</id>
    </interactant>
    <interactant intactId="EBI-948001">
        <id>Q15323</id>
        <label>KRT31</label>
    </interactant>
    <organismsDiffer>false</organismsDiffer>
    <experiments>3</experiments>
</comment>
<comment type="interaction">
    <interactant intactId="EBI-8640233">
        <id>Q5T686</id>
    </interactant>
    <interactant intactId="EBI-10171697">
        <id>Q6A162</id>
        <label>KRT40</label>
    </interactant>
    <organismsDiffer>false</organismsDiffer>
    <experiments>3</experiments>
</comment>
<comment type="interaction">
    <interactant intactId="EBI-8640233">
        <id>Q5T686</id>
    </interactant>
    <interactant intactId="EBI-12012928">
        <id>P60371</id>
        <label>KRTAP10-6</label>
    </interactant>
    <organismsDiffer>false</organismsDiffer>
    <experiments>3</experiments>
</comment>
<comment type="interaction">
    <interactant intactId="EBI-8640233">
        <id>Q5T686</id>
    </interactant>
    <interactant intactId="EBI-10172290">
        <id>P60409</id>
        <label>KRTAP10-7</label>
    </interactant>
    <organismsDiffer>false</organismsDiffer>
    <experiments>3</experiments>
</comment>
<comment type="interaction">
    <interactant intactId="EBI-8640233">
        <id>Q5T686</id>
    </interactant>
    <interactant intactId="EBI-10171774">
        <id>P60410</id>
        <label>KRTAP10-8</label>
    </interactant>
    <organismsDiffer>false</organismsDiffer>
    <experiments>3</experiments>
</comment>
<comment type="interaction">
    <interactant intactId="EBI-8640233">
        <id>Q5T686</id>
    </interactant>
    <interactant intactId="EBI-10172052">
        <id>P60411</id>
        <label>KRTAP10-9</label>
    </interactant>
    <organismsDiffer>false</organismsDiffer>
    <experiments>3</experiments>
</comment>
<comment type="interaction">
    <interactant intactId="EBI-8640233">
        <id>Q5T686</id>
    </interactant>
    <interactant intactId="EBI-10176379">
        <id>P59991</id>
        <label>KRTAP12-2</label>
    </interactant>
    <organismsDiffer>false</organismsDiffer>
    <experiments>4</experiments>
</comment>
<comment type="interaction">
    <interactant intactId="EBI-8640233">
        <id>Q5T686</id>
    </interactant>
    <interactant intactId="EBI-10172511">
        <id>Q9BYR5</id>
        <label>KRTAP4-2</label>
    </interactant>
    <organismsDiffer>false</organismsDiffer>
    <experiments>3</experiments>
</comment>
<comment type="interaction">
    <interactant intactId="EBI-8640233">
        <id>Q5T686</id>
    </interactant>
    <interactant intactId="EBI-11742507">
        <id>Q8TAP4-4</id>
        <label>LMO3</label>
    </interactant>
    <organismsDiffer>false</organismsDiffer>
    <experiments>3</experiments>
</comment>
<comment type="interaction">
    <interactant intactId="EBI-8640233">
        <id>Q5T686</id>
    </interactant>
    <interactant intactId="EBI-2341787">
        <id>Q17RB8</id>
        <label>LONRF1</label>
    </interactant>
    <organismsDiffer>false</organismsDiffer>
    <experiments>3</experiments>
</comment>
<comment type="interaction">
    <interactant intactId="EBI-8640233">
        <id>Q5T686</id>
    </interactant>
    <interactant intactId="EBI-724076">
        <id>Q99750</id>
        <label>MDFI</label>
    </interactant>
    <organismsDiffer>false</organismsDiffer>
    <experiments>7</experiments>
</comment>
<comment type="interaction">
    <interactant intactId="EBI-8640233">
        <id>Q5T686</id>
    </interactant>
    <interactant intactId="EBI-2340269">
        <id>Q13064</id>
        <label>MKRN3</label>
    </interactant>
    <organismsDiffer>false</organismsDiffer>
    <experiments>3</experiments>
</comment>
<comment type="interaction">
    <interactant intactId="EBI-8640233">
        <id>Q5T686</id>
    </interactant>
    <interactant intactId="EBI-530034">
        <id>O43189</id>
        <label>PHF1</label>
    </interactant>
    <organismsDiffer>false</organismsDiffer>
    <experiments>3</experiments>
</comment>
<comment type="interaction">
    <interactant intactId="EBI-8640233">
        <id>Q5T686</id>
    </interactant>
    <interactant intactId="EBI-79165">
        <id>Q9NRD5</id>
        <label>PICK1</label>
    </interactant>
    <organismsDiffer>false</organismsDiffer>
    <experiments>3</experiments>
</comment>
<comment type="interaction">
    <interactant intactId="EBI-8640233">
        <id>Q5T686</id>
    </interactant>
    <interactant intactId="EBI-1055079">
        <id>O15160</id>
        <label>POLR1C</label>
    </interactant>
    <organismsDiffer>false</organismsDiffer>
    <experiments>3</experiments>
</comment>
<comment type="interaction">
    <interactant intactId="EBI-8640233">
        <id>Q5T686</id>
    </interactant>
    <interactant intactId="EBI-710402">
        <id>Q96I34</id>
        <label>PPP1R16A</label>
    </interactant>
    <organismsDiffer>false</organismsDiffer>
    <experiments>3</experiments>
</comment>
<comment type="interaction">
    <interactant intactId="EBI-8640233">
        <id>Q5T686</id>
    </interactant>
    <interactant intactId="EBI-1383852">
        <id>P54646</id>
        <label>PRKAA2</label>
    </interactant>
    <organismsDiffer>false</organismsDiffer>
    <experiments>3</experiments>
</comment>
<comment type="interaction">
    <interactant intactId="EBI-8640233">
        <id>Q5T686</id>
    </interactant>
    <interactant intactId="EBI-476586">
        <id>P17612</id>
        <label>PRKACA</label>
    </interactant>
    <organismsDiffer>false</organismsDiffer>
    <experiments>3</experiments>
</comment>
<comment type="interaction">
    <interactant intactId="EBI-8640233">
        <id>Q5T686</id>
    </interactant>
    <interactant intactId="EBI-2679622">
        <id>P22694</id>
        <label>PRKACB</label>
    </interactant>
    <organismsDiffer>false</organismsDiffer>
    <experiments>3</experiments>
</comment>
<comment type="interaction">
    <interactant intactId="EBI-8640233">
        <id>Q5T686</id>
    </interactant>
    <interactant intactId="EBI-10226430">
        <id>Q0D2K3</id>
        <label>RIPPLY1</label>
    </interactant>
    <organismsDiffer>false</organismsDiffer>
    <experiments>3</experiments>
</comment>
<comment type="interaction">
    <interactant intactId="EBI-8640233">
        <id>Q5T686</id>
    </interactant>
    <interactant intactId="EBI-10246897">
        <id>Q5TAB7</id>
        <label>RIPPLY2</label>
    </interactant>
    <organismsDiffer>false</organismsDiffer>
    <experiments>3</experiments>
</comment>
<comment type="interaction">
    <interactant intactId="EBI-8640233">
        <id>Q5T686</id>
    </interactant>
    <interactant intactId="EBI-748391">
        <id>Q9BWG6</id>
        <label>SCNM1</label>
    </interactant>
    <organismsDiffer>false</organismsDiffer>
    <experiments>3</experiments>
</comment>
<comment type="sequence caution" evidence="6">
    <conflict type="frameshift">
        <sequence resource="EMBL-CDS" id="AAG44474"/>
    </conflict>
</comment>
<accession>Q5T686</accession>
<accession>Q53G32</accession>
<accession>Q9H2R9</accession>
<accession>Q9HBN9</accession>